<gene>
    <name evidence="1" type="primary">trmFO</name>
    <name type="ordered locus">TRQ2_0193</name>
</gene>
<feature type="chain" id="PRO_0000346418" description="Methylenetetrahydrofolate--tRNA-(uracil-5-)-methyltransferase TrmFO">
    <location>
        <begin position="1"/>
        <end position="435"/>
    </location>
</feature>
<feature type="binding site" evidence="1">
    <location>
        <begin position="7"/>
        <end position="12"/>
    </location>
    <ligand>
        <name>FAD</name>
        <dbReference type="ChEBI" id="CHEBI:57692"/>
    </ligand>
</feature>
<reference key="1">
    <citation type="journal article" date="2011" name="J. Bacteriol.">
        <title>Genome sequence of Thermotoga sp. strain RQ2, a hyperthermophilic bacterium isolated from a geothermally heated region of the seafloor near Ribeira Quente, the Azores.</title>
        <authorList>
            <person name="Swithers K.S."/>
            <person name="DiPippo J.L."/>
            <person name="Bruce D.C."/>
            <person name="Detter C."/>
            <person name="Tapia R."/>
            <person name="Han S."/>
            <person name="Saunders E."/>
            <person name="Goodwin L.A."/>
            <person name="Han J."/>
            <person name="Woyke T."/>
            <person name="Pitluck S."/>
            <person name="Pennacchio L."/>
            <person name="Nolan M."/>
            <person name="Mikhailova N."/>
            <person name="Lykidis A."/>
            <person name="Land M.L."/>
            <person name="Brettin T."/>
            <person name="Stetter K.O."/>
            <person name="Nelson K.E."/>
            <person name="Gogarten J.P."/>
            <person name="Noll K.M."/>
        </authorList>
    </citation>
    <scope>NUCLEOTIDE SEQUENCE [LARGE SCALE GENOMIC DNA]</scope>
    <source>
        <strain>RQ2</strain>
    </source>
</reference>
<keyword id="KW-0963">Cytoplasm</keyword>
<keyword id="KW-0274">FAD</keyword>
<keyword id="KW-0285">Flavoprotein</keyword>
<keyword id="KW-0489">Methyltransferase</keyword>
<keyword id="KW-0520">NAD</keyword>
<keyword id="KW-0521">NADP</keyword>
<keyword id="KW-0808">Transferase</keyword>
<keyword id="KW-0819">tRNA processing</keyword>
<comment type="function">
    <text evidence="1">Catalyzes the folate-dependent formation of 5-methyl-uridine at position 54 (M-5-U54) in all tRNAs.</text>
</comment>
<comment type="catalytic activity">
    <reaction evidence="1">
        <text>uridine(54) in tRNA + (6R)-5,10-methylene-5,6,7,8-tetrahydrofolate + NADH + H(+) = 5-methyluridine(54) in tRNA + (6S)-5,6,7,8-tetrahydrofolate + NAD(+)</text>
        <dbReference type="Rhea" id="RHEA:16873"/>
        <dbReference type="Rhea" id="RHEA-COMP:10167"/>
        <dbReference type="Rhea" id="RHEA-COMP:10193"/>
        <dbReference type="ChEBI" id="CHEBI:15378"/>
        <dbReference type="ChEBI" id="CHEBI:15636"/>
        <dbReference type="ChEBI" id="CHEBI:57453"/>
        <dbReference type="ChEBI" id="CHEBI:57540"/>
        <dbReference type="ChEBI" id="CHEBI:57945"/>
        <dbReference type="ChEBI" id="CHEBI:65315"/>
        <dbReference type="ChEBI" id="CHEBI:74447"/>
        <dbReference type="EC" id="2.1.1.74"/>
    </reaction>
</comment>
<comment type="catalytic activity">
    <reaction evidence="1">
        <text>uridine(54) in tRNA + (6R)-5,10-methylene-5,6,7,8-tetrahydrofolate + NADPH + H(+) = 5-methyluridine(54) in tRNA + (6S)-5,6,7,8-tetrahydrofolate + NADP(+)</text>
        <dbReference type="Rhea" id="RHEA:62372"/>
        <dbReference type="Rhea" id="RHEA-COMP:10167"/>
        <dbReference type="Rhea" id="RHEA-COMP:10193"/>
        <dbReference type="ChEBI" id="CHEBI:15378"/>
        <dbReference type="ChEBI" id="CHEBI:15636"/>
        <dbReference type="ChEBI" id="CHEBI:57453"/>
        <dbReference type="ChEBI" id="CHEBI:57783"/>
        <dbReference type="ChEBI" id="CHEBI:58349"/>
        <dbReference type="ChEBI" id="CHEBI:65315"/>
        <dbReference type="ChEBI" id="CHEBI:74447"/>
        <dbReference type="EC" id="2.1.1.74"/>
    </reaction>
</comment>
<comment type="cofactor">
    <cofactor evidence="1">
        <name>FAD</name>
        <dbReference type="ChEBI" id="CHEBI:57692"/>
    </cofactor>
</comment>
<comment type="subcellular location">
    <subcellularLocation>
        <location evidence="1">Cytoplasm</location>
    </subcellularLocation>
</comment>
<comment type="similarity">
    <text evidence="1">Belongs to the MnmG family. TrmFO subfamily.</text>
</comment>
<evidence type="ECO:0000255" key="1">
    <source>
        <dbReference type="HAMAP-Rule" id="MF_01037"/>
    </source>
</evidence>
<proteinExistence type="inferred from homology"/>
<sequence length="435" mass="49709">MIVNVIGAGLAGSEVTYNLGKRGIRVRLFEMRPKKMTEVHKTGYFAELVCSNSLKSEDITNAEGLLKAEMRLMGSITLEAAEKARVPSGKALAVDRNIFAKEVTEAVESLESVEIIREEVTEFDPEEGIWVVATGPATSDGLLPFLKKLLGDDFLFFFDAVSPIVTFESIDMERAFWGDRFGKGKDYINCPLTKEEYEEFWKALVEAEVIEMEDFDRKLLFERCQPIEEIARSGKDALRYGPLRPTGLVDPRTGKEPYAVIQLRREDKEGRFYSLVGFQTRLKWSEQKRVLRKIPCLRNAEIVRYGVMHRNVYINSPKLLDIFFRLKKHPNIFFAGQITGVEGYMESAASGIYVAYNVHRILKGLSPLKLPEETMMGALFSYIIEKVEGDLKPMYANFGLLPPLKVRVKDKFEKRKKLAERAIETMKKFLEENPW</sequence>
<organism>
    <name type="scientific">Thermotoga sp. (strain RQ2)</name>
    <dbReference type="NCBI Taxonomy" id="126740"/>
    <lineage>
        <taxon>Bacteria</taxon>
        <taxon>Thermotogati</taxon>
        <taxon>Thermotogota</taxon>
        <taxon>Thermotogae</taxon>
        <taxon>Thermotogales</taxon>
        <taxon>Thermotogaceae</taxon>
        <taxon>Thermotoga</taxon>
    </lineage>
</organism>
<name>TRMFO_THESQ</name>
<dbReference type="EC" id="2.1.1.74" evidence="1"/>
<dbReference type="EMBL" id="CP000969">
    <property type="protein sequence ID" value="ACB08553.1"/>
    <property type="molecule type" value="Genomic_DNA"/>
</dbReference>
<dbReference type="RefSeq" id="WP_012310379.1">
    <property type="nucleotide sequence ID" value="NC_010483.1"/>
</dbReference>
<dbReference type="SMR" id="B1L7X2"/>
<dbReference type="KEGG" id="trq:TRQ2_0193"/>
<dbReference type="HOGENOM" id="CLU_033057_1_0_0"/>
<dbReference type="Proteomes" id="UP000001687">
    <property type="component" value="Chromosome"/>
</dbReference>
<dbReference type="GO" id="GO:0005829">
    <property type="term" value="C:cytosol"/>
    <property type="evidence" value="ECO:0007669"/>
    <property type="project" value="TreeGrafter"/>
</dbReference>
<dbReference type="GO" id="GO:0050660">
    <property type="term" value="F:flavin adenine dinucleotide binding"/>
    <property type="evidence" value="ECO:0007669"/>
    <property type="project" value="UniProtKB-UniRule"/>
</dbReference>
<dbReference type="GO" id="GO:0047151">
    <property type="term" value="F:tRNA (uracil(54)-C5)-methyltransferase activity, 5,10-methylenetetrahydrofolate-dependent"/>
    <property type="evidence" value="ECO:0007669"/>
    <property type="project" value="UniProtKB-UniRule"/>
</dbReference>
<dbReference type="GO" id="GO:0030488">
    <property type="term" value="P:tRNA methylation"/>
    <property type="evidence" value="ECO:0007669"/>
    <property type="project" value="TreeGrafter"/>
</dbReference>
<dbReference type="GO" id="GO:0002098">
    <property type="term" value="P:tRNA wobble uridine modification"/>
    <property type="evidence" value="ECO:0007669"/>
    <property type="project" value="TreeGrafter"/>
</dbReference>
<dbReference type="FunFam" id="3.50.50.60:FF:000359">
    <property type="entry name" value="Methylenetetrahydrofolate--tRNA-(uracil-5-)-methyltransferase TrmFO"/>
    <property type="match status" value="1"/>
</dbReference>
<dbReference type="FunFam" id="3.50.50.60:FF:000412">
    <property type="entry name" value="Methylenetetrahydrofolate--tRNA-(uracil-5-)-methyltransferase TrmFO"/>
    <property type="match status" value="1"/>
</dbReference>
<dbReference type="Gene3D" id="3.50.50.60">
    <property type="entry name" value="FAD/NAD(P)-binding domain"/>
    <property type="match status" value="2"/>
</dbReference>
<dbReference type="HAMAP" id="MF_01037">
    <property type="entry name" value="TrmFO"/>
    <property type="match status" value="1"/>
</dbReference>
<dbReference type="InterPro" id="IPR036188">
    <property type="entry name" value="FAD/NAD-bd_sf"/>
</dbReference>
<dbReference type="InterPro" id="IPR002218">
    <property type="entry name" value="MnmG-rel"/>
</dbReference>
<dbReference type="InterPro" id="IPR040131">
    <property type="entry name" value="MnmG_N"/>
</dbReference>
<dbReference type="InterPro" id="IPR004417">
    <property type="entry name" value="TrmFO"/>
</dbReference>
<dbReference type="NCBIfam" id="TIGR00137">
    <property type="entry name" value="gid_trmFO"/>
    <property type="match status" value="1"/>
</dbReference>
<dbReference type="NCBIfam" id="NF003739">
    <property type="entry name" value="PRK05335.1"/>
    <property type="match status" value="1"/>
</dbReference>
<dbReference type="PANTHER" id="PTHR11806">
    <property type="entry name" value="GLUCOSE INHIBITED DIVISION PROTEIN A"/>
    <property type="match status" value="1"/>
</dbReference>
<dbReference type="PANTHER" id="PTHR11806:SF2">
    <property type="entry name" value="METHYLENETETRAHYDROFOLATE--TRNA-(URACIL-5-)-METHYLTRANSFERASE TRMFO"/>
    <property type="match status" value="1"/>
</dbReference>
<dbReference type="Pfam" id="PF01134">
    <property type="entry name" value="GIDA"/>
    <property type="match status" value="1"/>
</dbReference>
<dbReference type="SUPFAM" id="SSF51905">
    <property type="entry name" value="FAD/NAD(P)-binding domain"/>
    <property type="match status" value="1"/>
</dbReference>
<protein>
    <recommendedName>
        <fullName evidence="1">Methylenetetrahydrofolate--tRNA-(uracil-5-)-methyltransferase TrmFO</fullName>
        <ecNumber evidence="1">2.1.1.74</ecNumber>
    </recommendedName>
    <alternativeName>
        <fullName evidence="1">Folate-dependent tRNA (uracil-5-)-methyltransferase</fullName>
    </alternativeName>
    <alternativeName>
        <fullName evidence="1">Folate-dependent tRNA(M-5-U54)-methyltransferase</fullName>
    </alternativeName>
</protein>
<accession>B1L7X2</accession>